<evidence type="ECO:0000255" key="1">
    <source>
        <dbReference type="HAMAP-Rule" id="MF_03122"/>
    </source>
</evidence>
<evidence type="ECO:0000305" key="2"/>
<accession>C5FIC5</accession>
<dbReference type="EMBL" id="DS995702">
    <property type="protein sequence ID" value="EEQ29105.1"/>
    <property type="molecule type" value="Genomic_DNA"/>
</dbReference>
<dbReference type="RefSeq" id="XP_002848990.1">
    <property type="nucleotide sequence ID" value="XM_002848944.1"/>
</dbReference>
<dbReference type="SMR" id="C5FIC5"/>
<dbReference type="STRING" id="554155.C5FIC5"/>
<dbReference type="GeneID" id="9229042"/>
<dbReference type="VEuPathDB" id="FungiDB:MCYG_01924"/>
<dbReference type="eggNOG" id="KOG1628">
    <property type="taxonomic scope" value="Eukaryota"/>
</dbReference>
<dbReference type="HOGENOM" id="CLU_062507_0_0_1"/>
<dbReference type="OMA" id="TRFKGHE"/>
<dbReference type="OrthoDB" id="9834376at2759"/>
<dbReference type="Proteomes" id="UP000002035">
    <property type="component" value="Unassembled WGS sequence"/>
</dbReference>
<dbReference type="GO" id="GO:0022627">
    <property type="term" value="C:cytosolic small ribosomal subunit"/>
    <property type="evidence" value="ECO:0007669"/>
    <property type="project" value="UniProtKB-UniRule"/>
</dbReference>
<dbReference type="GO" id="GO:0003735">
    <property type="term" value="F:structural constituent of ribosome"/>
    <property type="evidence" value="ECO:0007669"/>
    <property type="project" value="UniProtKB-UniRule"/>
</dbReference>
<dbReference type="GO" id="GO:0006412">
    <property type="term" value="P:translation"/>
    <property type="evidence" value="ECO:0007669"/>
    <property type="project" value="UniProtKB-UniRule"/>
</dbReference>
<dbReference type="HAMAP" id="MF_03122">
    <property type="entry name" value="Ribosomal_eS1_euk"/>
    <property type="match status" value="1"/>
</dbReference>
<dbReference type="InterPro" id="IPR001593">
    <property type="entry name" value="Ribosomal_eS1"/>
</dbReference>
<dbReference type="InterPro" id="IPR018281">
    <property type="entry name" value="Ribosomal_eS1_CS"/>
</dbReference>
<dbReference type="InterPro" id="IPR027500">
    <property type="entry name" value="Ribosomal_eS1_euk"/>
</dbReference>
<dbReference type="PANTHER" id="PTHR11830">
    <property type="entry name" value="40S RIBOSOMAL PROTEIN S3A"/>
    <property type="match status" value="1"/>
</dbReference>
<dbReference type="Pfam" id="PF01015">
    <property type="entry name" value="Ribosomal_S3Ae"/>
    <property type="match status" value="1"/>
</dbReference>
<dbReference type="SMART" id="SM01397">
    <property type="entry name" value="Ribosomal_S3Ae"/>
    <property type="match status" value="1"/>
</dbReference>
<dbReference type="PROSITE" id="PS01191">
    <property type="entry name" value="RIBOSOMAL_S3AE"/>
    <property type="match status" value="1"/>
</dbReference>
<keyword id="KW-0007">Acetylation</keyword>
<keyword id="KW-0963">Cytoplasm</keyword>
<keyword id="KW-1185">Reference proteome</keyword>
<keyword id="KW-0687">Ribonucleoprotein</keyword>
<keyword id="KW-0689">Ribosomal protein</keyword>
<protein>
    <recommendedName>
        <fullName evidence="1">Small ribosomal subunit protein eS1</fullName>
    </recommendedName>
    <alternativeName>
        <fullName evidence="2">40S ribosomal protein S1</fullName>
    </alternativeName>
</protein>
<feature type="initiator methionine" description="Removed" evidence="1">
    <location>
        <position position="1"/>
    </location>
</feature>
<feature type="chain" id="PRO_0000389386" description="Small ribosomal subunit protein eS1">
    <location>
        <begin position="2"/>
        <end position="255"/>
    </location>
</feature>
<feature type="modified residue" description="N-acetylalanine; partial" evidence="1">
    <location>
        <position position="2"/>
    </location>
</feature>
<organism>
    <name type="scientific">Arthroderma otae (strain ATCC MYA-4605 / CBS 113480)</name>
    <name type="common">Microsporum canis</name>
    <dbReference type="NCBI Taxonomy" id="554155"/>
    <lineage>
        <taxon>Eukaryota</taxon>
        <taxon>Fungi</taxon>
        <taxon>Dikarya</taxon>
        <taxon>Ascomycota</taxon>
        <taxon>Pezizomycotina</taxon>
        <taxon>Eurotiomycetes</taxon>
        <taxon>Eurotiomycetidae</taxon>
        <taxon>Onygenales</taxon>
        <taxon>Arthrodermataceae</taxon>
        <taxon>Microsporum</taxon>
    </lineage>
</organism>
<reference key="1">
    <citation type="journal article" date="2012" name="MBio">
        <title>Comparative genome analysis of Trichophyton rubrum and related dermatophytes reveals candidate genes involved in infection.</title>
        <authorList>
            <person name="Martinez D.A."/>
            <person name="Oliver B.G."/>
            <person name="Graeser Y."/>
            <person name="Goldberg J.M."/>
            <person name="Li W."/>
            <person name="Martinez-Rossi N.M."/>
            <person name="Monod M."/>
            <person name="Shelest E."/>
            <person name="Barton R.C."/>
            <person name="Birch E."/>
            <person name="Brakhage A.A."/>
            <person name="Chen Z."/>
            <person name="Gurr S.J."/>
            <person name="Heiman D."/>
            <person name="Heitman J."/>
            <person name="Kosti I."/>
            <person name="Rossi A."/>
            <person name="Saif S."/>
            <person name="Samalova M."/>
            <person name="Saunders C.W."/>
            <person name="Shea T."/>
            <person name="Summerbell R.C."/>
            <person name="Xu J."/>
            <person name="Young S."/>
            <person name="Zeng Q."/>
            <person name="Birren B.W."/>
            <person name="Cuomo C.A."/>
            <person name="White T.C."/>
        </authorList>
    </citation>
    <scope>NUCLEOTIDE SEQUENCE [LARGE SCALE GENOMIC DNA]</scope>
    <source>
        <strain>ATCC MYA-4605 / CBS 113480</strain>
    </source>
</reference>
<comment type="subunit">
    <text evidence="1">Component of the small ribosomal subunit. Mature ribosomes consist of a small (40S) and a large (60S) subunit. The 40S subunit contains about 33 different proteins and 1 molecule of RNA (18S). The 60S subunit contains about 49 different proteins and 3 molecules of RNA (25S, 5.8S and 5S).</text>
</comment>
<comment type="subcellular location">
    <subcellularLocation>
        <location evidence="1">Cytoplasm</location>
    </subcellularLocation>
</comment>
<comment type="similarity">
    <text evidence="1">Belongs to the eukaryotic ribosomal protein eS1 family.</text>
</comment>
<gene>
    <name evidence="1" type="primary">RPS1</name>
    <name type="ORF">MCYG_01924</name>
</gene>
<proteinExistence type="inferred from homology"/>
<name>RS3A_ARTOC</name>
<sequence length="255" mass="29103">MAVGKNKRLSKGKKGLKKRTVDPFTRKDEYLVKAPTTFQVRDVGKTLVNRTTGLKNANDYLKGRVFEVSLADLQKDEAHSFRKVKLRVDEVQGKNCLTNFHGLDFTSDKLRSLVRKWQTLIEANVTVKTTDDYLVRLFAIAFTKRRPNQIKKTTYAQSSQIRAIRKKMTEIIQRQASSCTLTQLTKLVPEVIGREIEKSTQGIYPLQNVHIRKVKLLKSPKFDLGALLALHGEASTDDKGQKVEREFKEKVLESV</sequence>